<reference key="1">
    <citation type="journal article" date="1997" name="Nature">
        <title>The nucleotide sequence of Saccharomyces cerevisiae chromosome XII.</title>
        <authorList>
            <person name="Johnston M."/>
            <person name="Hillier L.W."/>
            <person name="Riles L."/>
            <person name="Albermann K."/>
            <person name="Andre B."/>
            <person name="Ansorge W."/>
            <person name="Benes V."/>
            <person name="Brueckner M."/>
            <person name="Delius H."/>
            <person name="Dubois E."/>
            <person name="Duesterhoeft A."/>
            <person name="Entian K.-D."/>
            <person name="Floeth M."/>
            <person name="Goffeau A."/>
            <person name="Hebling U."/>
            <person name="Heumann K."/>
            <person name="Heuss-Neitzel D."/>
            <person name="Hilbert H."/>
            <person name="Hilger F."/>
            <person name="Kleine K."/>
            <person name="Koetter P."/>
            <person name="Louis E.J."/>
            <person name="Messenguy F."/>
            <person name="Mewes H.-W."/>
            <person name="Miosga T."/>
            <person name="Moestl D."/>
            <person name="Mueller-Auer S."/>
            <person name="Nentwich U."/>
            <person name="Obermaier B."/>
            <person name="Piravandi E."/>
            <person name="Pohl T.M."/>
            <person name="Portetelle D."/>
            <person name="Purnelle B."/>
            <person name="Rechmann S."/>
            <person name="Rieger M."/>
            <person name="Rinke M."/>
            <person name="Rose M."/>
            <person name="Scharfe M."/>
            <person name="Scherens B."/>
            <person name="Scholler P."/>
            <person name="Schwager C."/>
            <person name="Schwarz S."/>
            <person name="Underwood A.P."/>
            <person name="Urrestarazu L.A."/>
            <person name="Vandenbol M."/>
            <person name="Verhasselt P."/>
            <person name="Vierendeels F."/>
            <person name="Voet M."/>
            <person name="Volckaert G."/>
            <person name="Voss H."/>
            <person name="Wambutt R."/>
            <person name="Wedler E."/>
            <person name="Wedler H."/>
            <person name="Zimmermann F.K."/>
            <person name="Zollner A."/>
            <person name="Hani J."/>
            <person name="Hoheisel J.D."/>
        </authorList>
    </citation>
    <scope>NUCLEOTIDE SEQUENCE [LARGE SCALE GENOMIC DNA]</scope>
    <source>
        <strain>ATCC 204508 / S288c</strain>
    </source>
</reference>
<reference key="2">
    <citation type="journal article" date="2014" name="G3 (Bethesda)">
        <title>The reference genome sequence of Saccharomyces cerevisiae: Then and now.</title>
        <authorList>
            <person name="Engel S.R."/>
            <person name="Dietrich F.S."/>
            <person name="Fisk D.G."/>
            <person name="Binkley G."/>
            <person name="Balakrishnan R."/>
            <person name="Costanzo M.C."/>
            <person name="Dwight S.S."/>
            <person name="Hitz B.C."/>
            <person name="Karra K."/>
            <person name="Nash R.S."/>
            <person name="Weng S."/>
            <person name="Wong E.D."/>
            <person name="Lloyd P."/>
            <person name="Skrzypek M.S."/>
            <person name="Miyasato S.R."/>
            <person name="Simison M."/>
            <person name="Cherry J.M."/>
        </authorList>
    </citation>
    <scope>GENOME REANNOTATION</scope>
    <source>
        <strain>ATCC 204508 / S288c</strain>
    </source>
</reference>
<reference key="3">
    <citation type="journal article" date="2009" name="Science">
        <title>Comprehensive characterization of genes required for protein folding in the endoplasmic reticulum.</title>
        <authorList>
            <person name="Jonikas M.C."/>
            <person name="Collins S.R."/>
            <person name="Denic V."/>
            <person name="Oh E."/>
            <person name="Quan E.M."/>
            <person name="Schmid V."/>
            <person name="Weibezahn J."/>
            <person name="Schwappach B."/>
            <person name="Walter P."/>
            <person name="Weissman J.S."/>
            <person name="Schuldiner M."/>
        </authorList>
    </citation>
    <scope>FUNCTION</scope>
</reference>
<reference key="4">
    <citation type="journal article" date="2010" name="PLoS Genet.">
        <title>A microarray-based genetic screen for yeast chronological aging factors.</title>
        <authorList>
            <person name="Matecic M."/>
            <person name="Smith D.L."/>
            <person name="Pan X."/>
            <person name="Maqani N."/>
            <person name="Bekiranov S."/>
            <person name="Boeke J.D."/>
            <person name="Smith J.S."/>
        </authorList>
    </citation>
    <scope>DISRUPTION PHENOTYPE</scope>
</reference>
<reference key="5">
    <citation type="journal article" date="2003" name="Nature">
        <title>Global analysis of protein expression in yeast.</title>
        <authorList>
            <person name="Ghaemmaghami S."/>
            <person name="Huh W.-K."/>
            <person name="Bower K."/>
            <person name="Howson R.W."/>
            <person name="Belle A."/>
            <person name="Dephoure N."/>
            <person name="O'Shea E.K."/>
            <person name="Weissman J.S."/>
        </authorList>
    </citation>
    <scope>LEVEL OF PROTEIN EXPRESSION [LARGE SCALE ANALYSIS]</scope>
</reference>
<organism>
    <name type="scientific">Saccharomyces cerevisiae (strain ATCC 204508 / S288c)</name>
    <name type="common">Baker's yeast</name>
    <dbReference type="NCBI Taxonomy" id="559292"/>
    <lineage>
        <taxon>Eukaryota</taxon>
        <taxon>Fungi</taxon>
        <taxon>Dikarya</taxon>
        <taxon>Ascomycota</taxon>
        <taxon>Saccharomycotina</taxon>
        <taxon>Saccharomycetes</taxon>
        <taxon>Saccharomycetales</taxon>
        <taxon>Saccharomycetaceae</taxon>
        <taxon>Saccharomyces</taxon>
    </lineage>
</organism>
<keyword id="KW-1185">Reference proteome</keyword>
<keyword id="KW-0732">Signal</keyword>
<gene>
    <name type="primary">LCL2</name>
    <name type="ordered locus">YLR104W</name>
</gene>
<feature type="signal peptide" evidence="1">
    <location>
        <begin position="1"/>
        <end position="24"/>
    </location>
</feature>
<feature type="chain" id="PRO_0000247350" description="Long chronological lifespan protein 2">
    <location>
        <begin position="25"/>
        <end position="131"/>
    </location>
</feature>
<evidence type="ECO:0000255" key="1"/>
<evidence type="ECO:0000269" key="2">
    <source>
    </source>
</evidence>
<evidence type="ECO:0000269" key="3">
    <source>
    </source>
</evidence>
<evidence type="ECO:0000269" key="4">
    <source>
    </source>
</evidence>
<evidence type="ECO:0000305" key="5"/>
<protein>
    <recommendedName>
        <fullName>Long chronological lifespan protein 2</fullName>
    </recommendedName>
</protein>
<sequence>MSQSRWSIVLIFALFIFGSTGVNAFFNFGHHQQQQQQQQQSYEDQVLNNPCDGYLCPDTLTCVAQQKDCPCPFPKSQLKCVLPDNKFVCISKPATHNEKFRAIYDDPVKGPKAKNKGFRDCGWVSDAYKNH</sequence>
<accession>Q08045</accession>
<accession>D6VYA4</accession>
<dbReference type="EMBL" id="U53876">
    <property type="protein sequence ID" value="AAB67552.1"/>
    <property type="molecule type" value="Genomic_DNA"/>
</dbReference>
<dbReference type="EMBL" id="Z73276">
    <property type="protein sequence ID" value="CAA97669.1"/>
    <property type="molecule type" value="Genomic_DNA"/>
</dbReference>
<dbReference type="EMBL" id="BK006945">
    <property type="protein sequence ID" value="DAA09420.1"/>
    <property type="molecule type" value="Genomic_DNA"/>
</dbReference>
<dbReference type="PIR" id="S64940">
    <property type="entry name" value="S64940"/>
</dbReference>
<dbReference type="RefSeq" id="NP_013205.1">
    <property type="nucleotide sequence ID" value="NM_001181991.1"/>
</dbReference>
<dbReference type="SMR" id="Q08045"/>
<dbReference type="BioGRID" id="31377">
    <property type="interactions" value="65"/>
</dbReference>
<dbReference type="DIP" id="DIP-4745N"/>
<dbReference type="FunCoup" id="Q08045">
    <property type="interactions" value="40"/>
</dbReference>
<dbReference type="IntAct" id="Q08045">
    <property type="interactions" value="3"/>
</dbReference>
<dbReference type="STRING" id="4932.YLR104W"/>
<dbReference type="PaxDb" id="4932-YLR104W"/>
<dbReference type="PeptideAtlas" id="Q08045"/>
<dbReference type="EnsemblFungi" id="YLR104W_mRNA">
    <property type="protein sequence ID" value="YLR104W"/>
    <property type="gene ID" value="YLR104W"/>
</dbReference>
<dbReference type="GeneID" id="850794"/>
<dbReference type="KEGG" id="sce:YLR104W"/>
<dbReference type="AGR" id="SGD:S000004094"/>
<dbReference type="SGD" id="S000004094">
    <property type="gene designation" value="LCL2"/>
</dbReference>
<dbReference type="VEuPathDB" id="FungiDB:YLR104W"/>
<dbReference type="eggNOG" id="ENOG502S416">
    <property type="taxonomic scope" value="Eukaryota"/>
</dbReference>
<dbReference type="HOGENOM" id="CLU_142363_1_0_1"/>
<dbReference type="InParanoid" id="Q08045"/>
<dbReference type="OMA" id="KPATHDE"/>
<dbReference type="OrthoDB" id="2234316at2759"/>
<dbReference type="BioCyc" id="YEAST:G3O-32252-MONOMER"/>
<dbReference type="BioGRID-ORCS" id="850794">
    <property type="hits" value="5 hits in 10 CRISPR screens"/>
</dbReference>
<dbReference type="PRO" id="PR:Q08045"/>
<dbReference type="Proteomes" id="UP000002311">
    <property type="component" value="Chromosome XII"/>
</dbReference>
<dbReference type="RNAct" id="Q08045">
    <property type="molecule type" value="protein"/>
</dbReference>
<dbReference type="GO" id="GO:0000324">
    <property type="term" value="C:fungal-type vacuole"/>
    <property type="evidence" value="ECO:0007005"/>
    <property type="project" value="SGD"/>
</dbReference>
<dbReference type="GO" id="GO:0036503">
    <property type="term" value="P:ERAD pathway"/>
    <property type="evidence" value="ECO:0007003"/>
    <property type="project" value="SGD"/>
</dbReference>
<dbReference type="CDD" id="cd23996">
    <property type="entry name" value="LCL2-like"/>
    <property type="match status" value="1"/>
</dbReference>
<dbReference type="InterPro" id="IPR034543">
    <property type="entry name" value="LCL2"/>
</dbReference>
<dbReference type="PANTHER" id="PTHR38425">
    <property type="entry name" value="LONG CHRONOLOGICAL LIFESPAN PROTEIN 2"/>
    <property type="match status" value="1"/>
</dbReference>
<dbReference type="PANTHER" id="PTHR38425:SF1">
    <property type="entry name" value="LONG CHRONOLOGICAL LIFESPAN PROTEIN 2"/>
    <property type="match status" value="1"/>
</dbReference>
<comment type="function">
    <text evidence="3">Probable component of the endoplasmic reticulum-associated degradation (ERAD) pathway that acts upstream of HRD3 and USA1.</text>
</comment>
<comment type="disruption phenotype">
    <text evidence="4">Leads to long chronological lifespan.</text>
</comment>
<comment type="miscellaneous">
    <text evidence="2">Present with 1990 molecules/cell in log phase SD medium.</text>
</comment>
<comment type="similarity">
    <text evidence="5">Belongs to the LCL2 family.</text>
</comment>
<proteinExistence type="evidence at protein level"/>
<name>LCL2_YEAST</name>